<sequence>MSIRAEEISALIKQQIENYQSEIEVSDVGTVIQVGDGIARAHGLDNVMAGELVEFSNGVMGLAQNLEENNVGIIILGPYTEIREGDEVRRTGRIMQVPVGKELIGRVVNPLGQPVDGLGPINTTNTRPIESPAPGVMDRKSVHEPLQTGIKAIDALVPIGRGQRELIIGDRQTGKTAVALDTIINQKDEDMICIYVAIGQKESTVRNVVETLRKHGALEYTIVVTASASQPAPLLYLAPYAGVTMGEEFMYNGKHVLVVYDDLSKQAAAYRELSLLLRRPPGREAYPGDVFYLHSRLLERAAKLSDAKGGGSLTALPFIETQAGDVSAYIPTNVISITDGQIFLQSDLFFSGVRPAIDAGTSVSRVGGSAQIKAMSKVSGTLRLDLASYRELEAFAQFGSDLDKATQAKLNRGARTVEVLKQGLHKPLRVEKQVIILYALTRGFLDDIPVVDITRFEEEFHAWLDSNATDLLEEIRTTKKLADDDKFAAAINGFKKVFVASE</sequence>
<keyword id="KW-0066">ATP synthesis</keyword>
<keyword id="KW-0067">ATP-binding</keyword>
<keyword id="KW-1003">Cell membrane</keyword>
<keyword id="KW-0139">CF(1)</keyword>
<keyword id="KW-0375">Hydrogen ion transport</keyword>
<keyword id="KW-0406">Ion transport</keyword>
<keyword id="KW-0472">Membrane</keyword>
<keyword id="KW-0547">Nucleotide-binding</keyword>
<keyword id="KW-1278">Translocase</keyword>
<keyword id="KW-0813">Transport</keyword>
<gene>
    <name evidence="1" type="primary">atpA</name>
    <name type="ordered locus">BALH_4810</name>
</gene>
<organism>
    <name type="scientific">Bacillus thuringiensis (strain Al Hakam)</name>
    <dbReference type="NCBI Taxonomy" id="412694"/>
    <lineage>
        <taxon>Bacteria</taxon>
        <taxon>Bacillati</taxon>
        <taxon>Bacillota</taxon>
        <taxon>Bacilli</taxon>
        <taxon>Bacillales</taxon>
        <taxon>Bacillaceae</taxon>
        <taxon>Bacillus</taxon>
        <taxon>Bacillus cereus group</taxon>
    </lineage>
</organism>
<dbReference type="EC" id="7.1.2.2" evidence="1"/>
<dbReference type="EMBL" id="CP000485">
    <property type="protein sequence ID" value="ABK87990.1"/>
    <property type="status" value="ALT_INIT"/>
    <property type="molecule type" value="Genomic_DNA"/>
</dbReference>
<dbReference type="RefSeq" id="WP_000027518.1">
    <property type="nucleotide sequence ID" value="NC_008600.1"/>
</dbReference>
<dbReference type="SMR" id="A0RL97"/>
<dbReference type="GeneID" id="93005816"/>
<dbReference type="KEGG" id="btl:BALH_4810"/>
<dbReference type="HOGENOM" id="CLU_010091_2_1_9"/>
<dbReference type="GO" id="GO:0005886">
    <property type="term" value="C:plasma membrane"/>
    <property type="evidence" value="ECO:0007669"/>
    <property type="project" value="UniProtKB-SubCell"/>
</dbReference>
<dbReference type="GO" id="GO:0045259">
    <property type="term" value="C:proton-transporting ATP synthase complex"/>
    <property type="evidence" value="ECO:0007669"/>
    <property type="project" value="UniProtKB-KW"/>
</dbReference>
<dbReference type="GO" id="GO:0043531">
    <property type="term" value="F:ADP binding"/>
    <property type="evidence" value="ECO:0007669"/>
    <property type="project" value="TreeGrafter"/>
</dbReference>
<dbReference type="GO" id="GO:0005524">
    <property type="term" value="F:ATP binding"/>
    <property type="evidence" value="ECO:0007669"/>
    <property type="project" value="UniProtKB-UniRule"/>
</dbReference>
<dbReference type="GO" id="GO:0046933">
    <property type="term" value="F:proton-transporting ATP synthase activity, rotational mechanism"/>
    <property type="evidence" value="ECO:0007669"/>
    <property type="project" value="UniProtKB-UniRule"/>
</dbReference>
<dbReference type="CDD" id="cd18113">
    <property type="entry name" value="ATP-synt_F1_alpha_C"/>
    <property type="match status" value="1"/>
</dbReference>
<dbReference type="CDD" id="cd18116">
    <property type="entry name" value="ATP-synt_F1_alpha_N"/>
    <property type="match status" value="1"/>
</dbReference>
<dbReference type="CDD" id="cd01132">
    <property type="entry name" value="F1-ATPase_alpha_CD"/>
    <property type="match status" value="1"/>
</dbReference>
<dbReference type="FunFam" id="1.20.150.20:FF:000001">
    <property type="entry name" value="ATP synthase subunit alpha"/>
    <property type="match status" value="1"/>
</dbReference>
<dbReference type="FunFam" id="2.40.30.20:FF:000001">
    <property type="entry name" value="ATP synthase subunit alpha"/>
    <property type="match status" value="1"/>
</dbReference>
<dbReference type="FunFam" id="3.40.50.300:FF:000002">
    <property type="entry name" value="ATP synthase subunit alpha"/>
    <property type="match status" value="1"/>
</dbReference>
<dbReference type="Gene3D" id="2.40.30.20">
    <property type="match status" value="1"/>
</dbReference>
<dbReference type="Gene3D" id="1.20.150.20">
    <property type="entry name" value="ATP synthase alpha/beta chain, C-terminal domain"/>
    <property type="match status" value="1"/>
</dbReference>
<dbReference type="Gene3D" id="3.40.50.300">
    <property type="entry name" value="P-loop containing nucleotide triphosphate hydrolases"/>
    <property type="match status" value="1"/>
</dbReference>
<dbReference type="HAMAP" id="MF_01346">
    <property type="entry name" value="ATP_synth_alpha_bact"/>
    <property type="match status" value="1"/>
</dbReference>
<dbReference type="InterPro" id="IPR023366">
    <property type="entry name" value="ATP_synth_asu-like_sf"/>
</dbReference>
<dbReference type="InterPro" id="IPR000793">
    <property type="entry name" value="ATP_synth_asu_C"/>
</dbReference>
<dbReference type="InterPro" id="IPR038376">
    <property type="entry name" value="ATP_synth_asu_C_sf"/>
</dbReference>
<dbReference type="InterPro" id="IPR033732">
    <property type="entry name" value="ATP_synth_F1_a_nt-bd_dom"/>
</dbReference>
<dbReference type="InterPro" id="IPR005294">
    <property type="entry name" value="ATP_synth_F1_asu"/>
</dbReference>
<dbReference type="InterPro" id="IPR020003">
    <property type="entry name" value="ATPase_a/bsu_AS"/>
</dbReference>
<dbReference type="InterPro" id="IPR004100">
    <property type="entry name" value="ATPase_F1/V1/A1_a/bsu_N"/>
</dbReference>
<dbReference type="InterPro" id="IPR036121">
    <property type="entry name" value="ATPase_F1/V1/A1_a/bsu_N_sf"/>
</dbReference>
<dbReference type="InterPro" id="IPR000194">
    <property type="entry name" value="ATPase_F1/V1/A1_a/bsu_nucl-bd"/>
</dbReference>
<dbReference type="InterPro" id="IPR027417">
    <property type="entry name" value="P-loop_NTPase"/>
</dbReference>
<dbReference type="NCBIfam" id="TIGR00962">
    <property type="entry name" value="atpA"/>
    <property type="match status" value="1"/>
</dbReference>
<dbReference type="NCBIfam" id="NF009884">
    <property type="entry name" value="PRK13343.1"/>
    <property type="match status" value="1"/>
</dbReference>
<dbReference type="PANTHER" id="PTHR48082">
    <property type="entry name" value="ATP SYNTHASE SUBUNIT ALPHA, MITOCHONDRIAL"/>
    <property type="match status" value="1"/>
</dbReference>
<dbReference type="PANTHER" id="PTHR48082:SF2">
    <property type="entry name" value="ATP SYNTHASE SUBUNIT ALPHA, MITOCHONDRIAL"/>
    <property type="match status" value="1"/>
</dbReference>
<dbReference type="Pfam" id="PF00006">
    <property type="entry name" value="ATP-synt_ab"/>
    <property type="match status" value="1"/>
</dbReference>
<dbReference type="Pfam" id="PF00306">
    <property type="entry name" value="ATP-synt_ab_C"/>
    <property type="match status" value="1"/>
</dbReference>
<dbReference type="Pfam" id="PF02874">
    <property type="entry name" value="ATP-synt_ab_N"/>
    <property type="match status" value="1"/>
</dbReference>
<dbReference type="PIRSF" id="PIRSF039088">
    <property type="entry name" value="F_ATPase_subunit_alpha"/>
    <property type="match status" value="1"/>
</dbReference>
<dbReference type="SUPFAM" id="SSF47917">
    <property type="entry name" value="C-terminal domain of alpha and beta subunits of F1 ATP synthase"/>
    <property type="match status" value="1"/>
</dbReference>
<dbReference type="SUPFAM" id="SSF50615">
    <property type="entry name" value="N-terminal domain of alpha and beta subunits of F1 ATP synthase"/>
    <property type="match status" value="1"/>
</dbReference>
<dbReference type="SUPFAM" id="SSF52540">
    <property type="entry name" value="P-loop containing nucleoside triphosphate hydrolases"/>
    <property type="match status" value="1"/>
</dbReference>
<dbReference type="PROSITE" id="PS00152">
    <property type="entry name" value="ATPASE_ALPHA_BETA"/>
    <property type="match status" value="1"/>
</dbReference>
<comment type="function">
    <text evidence="1">Produces ATP from ADP in the presence of a proton gradient across the membrane. The alpha chain is a regulatory subunit.</text>
</comment>
<comment type="catalytic activity">
    <reaction evidence="1">
        <text>ATP + H2O + 4 H(+)(in) = ADP + phosphate + 5 H(+)(out)</text>
        <dbReference type="Rhea" id="RHEA:57720"/>
        <dbReference type="ChEBI" id="CHEBI:15377"/>
        <dbReference type="ChEBI" id="CHEBI:15378"/>
        <dbReference type="ChEBI" id="CHEBI:30616"/>
        <dbReference type="ChEBI" id="CHEBI:43474"/>
        <dbReference type="ChEBI" id="CHEBI:456216"/>
        <dbReference type="EC" id="7.1.2.2"/>
    </reaction>
</comment>
<comment type="subunit">
    <text evidence="1">F-type ATPases have 2 components, CF(1) - the catalytic core - and CF(0) - the membrane proton channel. CF(1) has five subunits: alpha(3), beta(3), gamma(1), delta(1), epsilon(1). CF(0) has three main subunits: a(1), b(2) and c(9-12). The alpha and beta chains form an alternating ring which encloses part of the gamma chain. CF(1) is attached to CF(0) by a central stalk formed by the gamma and epsilon chains, while a peripheral stalk is formed by the delta and b chains.</text>
</comment>
<comment type="subcellular location">
    <subcellularLocation>
        <location evidence="1">Cell membrane</location>
        <topology evidence="1">Peripheral membrane protein</topology>
    </subcellularLocation>
</comment>
<comment type="similarity">
    <text evidence="1">Belongs to the ATPase alpha/beta chains family.</text>
</comment>
<comment type="sequence caution" evidence="3">
    <conflict type="erroneous initiation">
        <sequence resource="EMBL-CDS" id="ABK87990"/>
    </conflict>
</comment>
<evidence type="ECO:0000255" key="1">
    <source>
        <dbReference type="HAMAP-Rule" id="MF_01346"/>
    </source>
</evidence>
<evidence type="ECO:0000256" key="2">
    <source>
        <dbReference type="SAM" id="MobiDB-lite"/>
    </source>
</evidence>
<evidence type="ECO:0000305" key="3"/>
<feature type="chain" id="PRO_0000302626" description="ATP synthase subunit alpha">
    <location>
        <begin position="1"/>
        <end position="502"/>
    </location>
</feature>
<feature type="region of interest" description="Disordered" evidence="2">
    <location>
        <begin position="115"/>
        <end position="135"/>
    </location>
</feature>
<feature type="binding site" evidence="1">
    <location>
        <begin position="169"/>
        <end position="176"/>
    </location>
    <ligand>
        <name>ATP</name>
        <dbReference type="ChEBI" id="CHEBI:30616"/>
    </ligand>
</feature>
<feature type="site" description="Required for activity" evidence="1">
    <location>
        <position position="362"/>
    </location>
</feature>
<proteinExistence type="inferred from homology"/>
<accession>A0RL97</accession>
<reference key="1">
    <citation type="journal article" date="2007" name="J. Bacteriol.">
        <title>The complete genome sequence of Bacillus thuringiensis Al Hakam.</title>
        <authorList>
            <person name="Challacombe J.F."/>
            <person name="Altherr M.R."/>
            <person name="Xie G."/>
            <person name="Bhotika S.S."/>
            <person name="Brown N."/>
            <person name="Bruce D."/>
            <person name="Campbell C.S."/>
            <person name="Campbell M.L."/>
            <person name="Chen J."/>
            <person name="Chertkov O."/>
            <person name="Cleland C."/>
            <person name="Dimitrijevic M."/>
            <person name="Doggett N.A."/>
            <person name="Fawcett J.J."/>
            <person name="Glavina T."/>
            <person name="Goodwin L.A."/>
            <person name="Green L.D."/>
            <person name="Han C.S."/>
            <person name="Hill K.K."/>
            <person name="Hitchcock P."/>
            <person name="Jackson P.J."/>
            <person name="Keim P."/>
            <person name="Kewalramani A.R."/>
            <person name="Longmire J."/>
            <person name="Lucas S."/>
            <person name="Malfatti S."/>
            <person name="Martinez D."/>
            <person name="McMurry K."/>
            <person name="Meincke L.J."/>
            <person name="Misra M."/>
            <person name="Moseman B.L."/>
            <person name="Mundt M."/>
            <person name="Munk A.C."/>
            <person name="Okinaka R.T."/>
            <person name="Parson-Quintana B."/>
            <person name="Reilly L.P."/>
            <person name="Richardson P."/>
            <person name="Robinson D.L."/>
            <person name="Saunders E."/>
            <person name="Tapia R."/>
            <person name="Tesmer J.G."/>
            <person name="Thayer N."/>
            <person name="Thompson L.S."/>
            <person name="Tice H."/>
            <person name="Ticknor L.O."/>
            <person name="Wills P.L."/>
            <person name="Gilna P."/>
            <person name="Brettin T.S."/>
        </authorList>
    </citation>
    <scope>NUCLEOTIDE SEQUENCE [LARGE SCALE GENOMIC DNA]</scope>
    <source>
        <strain>Al Hakam</strain>
    </source>
</reference>
<protein>
    <recommendedName>
        <fullName evidence="1">ATP synthase subunit alpha</fullName>
        <ecNumber evidence="1">7.1.2.2</ecNumber>
    </recommendedName>
    <alternativeName>
        <fullName evidence="1">ATP synthase F1 sector subunit alpha</fullName>
    </alternativeName>
    <alternativeName>
        <fullName evidence="1">F-ATPase subunit alpha</fullName>
    </alternativeName>
</protein>
<name>ATPA_BACAH</name>